<gene>
    <name evidence="1" type="primary">azoR</name>
    <name type="ordered locus">USA300HOU_0218</name>
</gene>
<comment type="function">
    <text evidence="1">Quinone reductase that provides resistance to thiol-specific stress caused by electrophilic quinones.</text>
</comment>
<comment type="function">
    <text evidence="1">Also exhibits azoreductase activity. Catalyzes the reductive cleavage of the azo bond in aromatic azo compounds to the corresponding amines.</text>
</comment>
<comment type="catalytic activity">
    <reaction evidence="1">
        <text>2 a quinone + NADH + H(+) = 2 a 1,4-benzosemiquinone + NAD(+)</text>
        <dbReference type="Rhea" id="RHEA:65952"/>
        <dbReference type="ChEBI" id="CHEBI:15378"/>
        <dbReference type="ChEBI" id="CHEBI:57540"/>
        <dbReference type="ChEBI" id="CHEBI:57945"/>
        <dbReference type="ChEBI" id="CHEBI:132124"/>
        <dbReference type="ChEBI" id="CHEBI:134225"/>
    </reaction>
</comment>
<comment type="catalytic activity">
    <reaction evidence="1">
        <text>N,N-dimethyl-1,4-phenylenediamine + anthranilate + 2 NAD(+) = 2-(4-dimethylaminophenyl)diazenylbenzoate + 2 NADH + 2 H(+)</text>
        <dbReference type="Rhea" id="RHEA:55872"/>
        <dbReference type="ChEBI" id="CHEBI:15378"/>
        <dbReference type="ChEBI" id="CHEBI:15783"/>
        <dbReference type="ChEBI" id="CHEBI:16567"/>
        <dbReference type="ChEBI" id="CHEBI:57540"/>
        <dbReference type="ChEBI" id="CHEBI:57945"/>
        <dbReference type="ChEBI" id="CHEBI:71579"/>
        <dbReference type="EC" id="1.7.1.17"/>
    </reaction>
</comment>
<comment type="cofactor">
    <cofactor evidence="1">
        <name>FMN</name>
        <dbReference type="ChEBI" id="CHEBI:58210"/>
    </cofactor>
    <text evidence="1">Binds 1 FMN per subunit.</text>
</comment>
<comment type="subunit">
    <text evidence="1">Homodimer.</text>
</comment>
<comment type="similarity">
    <text evidence="1">Belongs to the azoreductase type 1 family.</text>
</comment>
<protein>
    <recommendedName>
        <fullName evidence="1">FMN-dependent NADH:quinone oxidoreductase</fullName>
        <ecNumber evidence="1">1.6.5.-</ecNumber>
    </recommendedName>
    <alternativeName>
        <fullName evidence="1">Azo-dye reductase</fullName>
    </alternativeName>
    <alternativeName>
        <fullName evidence="1">FMN-dependent NADH-azo compound oxidoreductase</fullName>
    </alternativeName>
    <alternativeName>
        <fullName evidence="1">FMN-dependent NADH-azoreductase</fullName>
        <ecNumber evidence="1">1.7.1.17</ecNumber>
    </alternativeName>
</protein>
<name>AZOR_STAAT</name>
<accession>A8Z0H0</accession>
<evidence type="ECO:0000255" key="1">
    <source>
        <dbReference type="HAMAP-Rule" id="MF_01216"/>
    </source>
</evidence>
<proteinExistence type="inferred from homology"/>
<sequence>MAKVLYITAHPFNELVSNSMAAGKAFIETYQQQHPDDEVKHIDLFETYIPVIDKDVLTGWGKMSNGETLTDDEQMKVSRLSDILEEFLSADKYVFVTPMWNLSFPPVVKAYIDAISIAGKTFKYSAEGPQGLLTDKKVLHIQSRGGYYTEGPAADFEMGDRYLRTIMTFLGVPSYETIIIEGHNAEPHKTEEIKATSINNAEKLATTF</sequence>
<feature type="chain" id="PRO_1000085591" description="FMN-dependent NADH:quinone oxidoreductase">
    <location>
        <begin position="1"/>
        <end position="208"/>
    </location>
</feature>
<feature type="binding site" evidence="1">
    <location>
        <begin position="17"/>
        <end position="19"/>
    </location>
    <ligand>
        <name>FMN</name>
        <dbReference type="ChEBI" id="CHEBI:58210"/>
    </ligand>
</feature>
<feature type="binding site" evidence="1">
    <location>
        <begin position="99"/>
        <end position="102"/>
    </location>
    <ligand>
        <name>FMN</name>
        <dbReference type="ChEBI" id="CHEBI:58210"/>
    </ligand>
</feature>
<feature type="binding site" evidence="1">
    <location>
        <begin position="143"/>
        <end position="146"/>
    </location>
    <ligand>
        <name>FMN</name>
        <dbReference type="ChEBI" id="CHEBI:58210"/>
    </ligand>
</feature>
<dbReference type="EC" id="1.6.5.-" evidence="1"/>
<dbReference type="EC" id="1.7.1.17" evidence="1"/>
<dbReference type="EMBL" id="CP000730">
    <property type="protein sequence ID" value="ABX28249.1"/>
    <property type="molecule type" value="Genomic_DNA"/>
</dbReference>
<dbReference type="RefSeq" id="WP_001151451.1">
    <property type="nucleotide sequence ID" value="NC_010079.1"/>
</dbReference>
<dbReference type="SMR" id="A8Z0H0"/>
<dbReference type="KEGG" id="sax:USA300HOU_0218"/>
<dbReference type="HOGENOM" id="CLU_088964_3_1_9"/>
<dbReference type="GO" id="GO:0009055">
    <property type="term" value="F:electron transfer activity"/>
    <property type="evidence" value="ECO:0007669"/>
    <property type="project" value="UniProtKB-UniRule"/>
</dbReference>
<dbReference type="GO" id="GO:0010181">
    <property type="term" value="F:FMN binding"/>
    <property type="evidence" value="ECO:0007669"/>
    <property type="project" value="UniProtKB-UniRule"/>
</dbReference>
<dbReference type="GO" id="GO:0016652">
    <property type="term" value="F:oxidoreductase activity, acting on NAD(P)H as acceptor"/>
    <property type="evidence" value="ECO:0007669"/>
    <property type="project" value="UniProtKB-UniRule"/>
</dbReference>
<dbReference type="GO" id="GO:0016655">
    <property type="term" value="F:oxidoreductase activity, acting on NAD(P)H, quinone or similar compound as acceptor"/>
    <property type="evidence" value="ECO:0007669"/>
    <property type="project" value="InterPro"/>
</dbReference>
<dbReference type="Gene3D" id="3.40.50.360">
    <property type="match status" value="1"/>
</dbReference>
<dbReference type="HAMAP" id="MF_01216">
    <property type="entry name" value="Azoreductase_type1"/>
    <property type="match status" value="1"/>
</dbReference>
<dbReference type="InterPro" id="IPR003680">
    <property type="entry name" value="Flavodoxin_fold"/>
</dbReference>
<dbReference type="InterPro" id="IPR029039">
    <property type="entry name" value="Flavoprotein-like_sf"/>
</dbReference>
<dbReference type="InterPro" id="IPR050104">
    <property type="entry name" value="FMN-dep_NADH:Q_OxRdtase_AzoR1"/>
</dbReference>
<dbReference type="InterPro" id="IPR023048">
    <property type="entry name" value="NADH:quinone_OxRdtase_FMN_depd"/>
</dbReference>
<dbReference type="NCBIfam" id="NF010075">
    <property type="entry name" value="PRK13556.1"/>
    <property type="match status" value="1"/>
</dbReference>
<dbReference type="PANTHER" id="PTHR43741">
    <property type="entry name" value="FMN-DEPENDENT NADH-AZOREDUCTASE 1"/>
    <property type="match status" value="1"/>
</dbReference>
<dbReference type="PANTHER" id="PTHR43741:SF7">
    <property type="entry name" value="FMN-DEPENDENT NADH:QUINONE OXIDOREDUCTASE"/>
    <property type="match status" value="1"/>
</dbReference>
<dbReference type="Pfam" id="PF02525">
    <property type="entry name" value="Flavodoxin_2"/>
    <property type="match status" value="1"/>
</dbReference>
<dbReference type="SUPFAM" id="SSF52218">
    <property type="entry name" value="Flavoproteins"/>
    <property type="match status" value="1"/>
</dbReference>
<reference key="1">
    <citation type="journal article" date="2007" name="BMC Microbiol.">
        <title>Subtle genetic changes enhance virulence of methicillin resistant and sensitive Staphylococcus aureus.</title>
        <authorList>
            <person name="Highlander S.K."/>
            <person name="Hulten K.G."/>
            <person name="Qin X."/>
            <person name="Jiang H."/>
            <person name="Yerrapragada S."/>
            <person name="Mason E.O. Jr."/>
            <person name="Shang Y."/>
            <person name="Williams T.M."/>
            <person name="Fortunov R.M."/>
            <person name="Liu Y."/>
            <person name="Igboeli O."/>
            <person name="Petrosino J."/>
            <person name="Tirumalai M."/>
            <person name="Uzman A."/>
            <person name="Fox G.E."/>
            <person name="Cardenas A.M."/>
            <person name="Muzny D.M."/>
            <person name="Hemphill L."/>
            <person name="Ding Y."/>
            <person name="Dugan S."/>
            <person name="Blyth P.R."/>
            <person name="Buhay C.J."/>
            <person name="Dinh H.H."/>
            <person name="Hawes A.C."/>
            <person name="Holder M."/>
            <person name="Kovar C.L."/>
            <person name="Lee S.L."/>
            <person name="Liu W."/>
            <person name="Nazareth L.V."/>
            <person name="Wang Q."/>
            <person name="Zhou J."/>
            <person name="Kaplan S.L."/>
            <person name="Weinstock G.M."/>
        </authorList>
    </citation>
    <scope>NUCLEOTIDE SEQUENCE [LARGE SCALE GENOMIC DNA]</scope>
    <source>
        <strain>USA300 / TCH1516</strain>
    </source>
</reference>
<organism>
    <name type="scientific">Staphylococcus aureus (strain USA300 / TCH1516)</name>
    <dbReference type="NCBI Taxonomy" id="451516"/>
    <lineage>
        <taxon>Bacteria</taxon>
        <taxon>Bacillati</taxon>
        <taxon>Bacillota</taxon>
        <taxon>Bacilli</taxon>
        <taxon>Bacillales</taxon>
        <taxon>Staphylococcaceae</taxon>
        <taxon>Staphylococcus</taxon>
    </lineage>
</organism>
<keyword id="KW-0285">Flavoprotein</keyword>
<keyword id="KW-0288">FMN</keyword>
<keyword id="KW-0520">NAD</keyword>
<keyword id="KW-0560">Oxidoreductase</keyword>